<sequence length="387" mass="42523">MRTLRRLKFMSSPSLSDLGKREPGAAGTDERGTQQRRACANATWNSIHNGVIAVFQRKGLPDQELFILNEGVRQLLKTELGSFFTEYLQNQLLTKGMVILRDKIRFYEGQKLLDSLAETWDFFFSDVLPTLQAIFYPVQGKEPSVRQLALLHFRNTITLSVKLEDALARSHARVPPAIAQMLLVLQGVHESRGVTEDYLRLETLIQKVVSPYLGTYGLYSNEGPCTHSCILEKRFLRRSRSGDILAKNPVVRSKSYNTPLLNPVAEHEAEGTAASGTSIRRHSVSEMTSCPEPQGFVDTPGQGPSGTFRSSPTPHSGPCPSRLYPPAHSPEQGPGHGSPSTSSPETLVDQILESADSDSEGIFIDFGRGSRSSVSDFEAPGGRPSVV</sequence>
<reference evidence="9 12" key="1">
    <citation type="journal article" date="2003" name="Gene">
        <title>Identification and characterization of a gene encoding a putative mouse Rho GTPase activating protein gene 8, Arhgap8.</title>
        <authorList>
            <person name="Shan Z."/>
            <person name="Haaf T."/>
            <person name="Popescu N.C."/>
        </authorList>
    </citation>
    <scope>NUCLEOTIDE SEQUENCE [MRNA] (ISOFORM 1)</scope>
    <scope>TISSUE SPECIFICITY</scope>
</reference>
<reference evidence="9 14" key="2">
    <citation type="journal article" date="2005" name="Science">
        <title>The transcriptional landscape of the mammalian genome.</title>
        <authorList>
            <person name="Carninci P."/>
            <person name="Kasukawa T."/>
            <person name="Katayama S."/>
            <person name="Gough J."/>
            <person name="Frith M.C."/>
            <person name="Maeda N."/>
            <person name="Oyama R."/>
            <person name="Ravasi T."/>
            <person name="Lenhard B."/>
            <person name="Wells C."/>
            <person name="Kodzius R."/>
            <person name="Shimokawa K."/>
            <person name="Bajic V.B."/>
            <person name="Brenner S.E."/>
            <person name="Batalov S."/>
            <person name="Forrest A.R."/>
            <person name="Zavolan M."/>
            <person name="Davis M.J."/>
            <person name="Wilming L.G."/>
            <person name="Aidinis V."/>
            <person name="Allen J.E."/>
            <person name="Ambesi-Impiombato A."/>
            <person name="Apweiler R."/>
            <person name="Aturaliya R.N."/>
            <person name="Bailey T.L."/>
            <person name="Bansal M."/>
            <person name="Baxter L."/>
            <person name="Beisel K.W."/>
            <person name="Bersano T."/>
            <person name="Bono H."/>
            <person name="Chalk A.M."/>
            <person name="Chiu K.P."/>
            <person name="Choudhary V."/>
            <person name="Christoffels A."/>
            <person name="Clutterbuck D.R."/>
            <person name="Crowe M.L."/>
            <person name="Dalla E."/>
            <person name="Dalrymple B.P."/>
            <person name="de Bono B."/>
            <person name="Della Gatta G."/>
            <person name="di Bernardo D."/>
            <person name="Down T."/>
            <person name="Engstrom P."/>
            <person name="Fagiolini M."/>
            <person name="Faulkner G."/>
            <person name="Fletcher C.F."/>
            <person name="Fukushima T."/>
            <person name="Furuno M."/>
            <person name="Futaki S."/>
            <person name="Gariboldi M."/>
            <person name="Georgii-Hemming P."/>
            <person name="Gingeras T.R."/>
            <person name="Gojobori T."/>
            <person name="Green R.E."/>
            <person name="Gustincich S."/>
            <person name="Harbers M."/>
            <person name="Hayashi Y."/>
            <person name="Hensch T.K."/>
            <person name="Hirokawa N."/>
            <person name="Hill D."/>
            <person name="Huminiecki L."/>
            <person name="Iacono M."/>
            <person name="Ikeo K."/>
            <person name="Iwama A."/>
            <person name="Ishikawa T."/>
            <person name="Jakt M."/>
            <person name="Kanapin A."/>
            <person name="Katoh M."/>
            <person name="Kawasawa Y."/>
            <person name="Kelso J."/>
            <person name="Kitamura H."/>
            <person name="Kitano H."/>
            <person name="Kollias G."/>
            <person name="Krishnan S.P."/>
            <person name="Kruger A."/>
            <person name="Kummerfeld S.K."/>
            <person name="Kurochkin I.V."/>
            <person name="Lareau L.F."/>
            <person name="Lazarevic D."/>
            <person name="Lipovich L."/>
            <person name="Liu J."/>
            <person name="Liuni S."/>
            <person name="McWilliam S."/>
            <person name="Madan Babu M."/>
            <person name="Madera M."/>
            <person name="Marchionni L."/>
            <person name="Matsuda H."/>
            <person name="Matsuzawa S."/>
            <person name="Miki H."/>
            <person name="Mignone F."/>
            <person name="Miyake S."/>
            <person name="Morris K."/>
            <person name="Mottagui-Tabar S."/>
            <person name="Mulder N."/>
            <person name="Nakano N."/>
            <person name="Nakauchi H."/>
            <person name="Ng P."/>
            <person name="Nilsson R."/>
            <person name="Nishiguchi S."/>
            <person name="Nishikawa S."/>
            <person name="Nori F."/>
            <person name="Ohara O."/>
            <person name="Okazaki Y."/>
            <person name="Orlando V."/>
            <person name="Pang K.C."/>
            <person name="Pavan W.J."/>
            <person name="Pavesi G."/>
            <person name="Pesole G."/>
            <person name="Petrovsky N."/>
            <person name="Piazza S."/>
            <person name="Reed J."/>
            <person name="Reid J.F."/>
            <person name="Ring B.Z."/>
            <person name="Ringwald M."/>
            <person name="Rost B."/>
            <person name="Ruan Y."/>
            <person name="Salzberg S.L."/>
            <person name="Sandelin A."/>
            <person name="Schneider C."/>
            <person name="Schoenbach C."/>
            <person name="Sekiguchi K."/>
            <person name="Semple C.A."/>
            <person name="Seno S."/>
            <person name="Sessa L."/>
            <person name="Sheng Y."/>
            <person name="Shibata Y."/>
            <person name="Shimada H."/>
            <person name="Shimada K."/>
            <person name="Silva D."/>
            <person name="Sinclair B."/>
            <person name="Sperling S."/>
            <person name="Stupka E."/>
            <person name="Sugiura K."/>
            <person name="Sultana R."/>
            <person name="Takenaka Y."/>
            <person name="Taki K."/>
            <person name="Tammoja K."/>
            <person name="Tan S.L."/>
            <person name="Tang S."/>
            <person name="Taylor M.S."/>
            <person name="Tegner J."/>
            <person name="Teichmann S.A."/>
            <person name="Ueda H.R."/>
            <person name="van Nimwegen E."/>
            <person name="Verardo R."/>
            <person name="Wei C.L."/>
            <person name="Yagi K."/>
            <person name="Yamanishi H."/>
            <person name="Zabarovsky E."/>
            <person name="Zhu S."/>
            <person name="Zimmer A."/>
            <person name="Hide W."/>
            <person name="Bult C."/>
            <person name="Grimmond S.M."/>
            <person name="Teasdale R.D."/>
            <person name="Liu E.T."/>
            <person name="Brusic V."/>
            <person name="Quackenbush J."/>
            <person name="Wahlestedt C."/>
            <person name="Mattick J.S."/>
            <person name="Hume D.A."/>
            <person name="Kai C."/>
            <person name="Sasaki D."/>
            <person name="Tomaru Y."/>
            <person name="Fukuda S."/>
            <person name="Kanamori-Katayama M."/>
            <person name="Suzuki M."/>
            <person name="Aoki J."/>
            <person name="Arakawa T."/>
            <person name="Iida J."/>
            <person name="Imamura K."/>
            <person name="Itoh M."/>
            <person name="Kato T."/>
            <person name="Kawaji H."/>
            <person name="Kawagashira N."/>
            <person name="Kawashima T."/>
            <person name="Kojima M."/>
            <person name="Kondo S."/>
            <person name="Konno H."/>
            <person name="Nakano K."/>
            <person name="Ninomiya N."/>
            <person name="Nishio T."/>
            <person name="Okada M."/>
            <person name="Plessy C."/>
            <person name="Shibata K."/>
            <person name="Shiraki T."/>
            <person name="Suzuki S."/>
            <person name="Tagami M."/>
            <person name="Waki K."/>
            <person name="Watahiki A."/>
            <person name="Okamura-Oho Y."/>
            <person name="Suzuki H."/>
            <person name="Kawai J."/>
            <person name="Hayashizaki Y."/>
        </authorList>
    </citation>
    <scope>NUCLEOTIDE SEQUENCE [LARGE SCALE MRNA] (ISOFORMS 1 AND 2)</scope>
    <source>
        <strain evidence="14">C57BL/6J</strain>
        <tissue evidence="13">Corpora quadrigemina</tissue>
        <tissue evidence="14">Corpus striatum</tissue>
    </source>
</reference>
<reference evidence="9 11" key="3">
    <citation type="journal article" date="2004" name="Genome Res.">
        <title>The status, quality, and expansion of the NIH full-length cDNA project: the Mammalian Gene Collection (MGC).</title>
        <authorList>
            <consortium name="The MGC Project Team"/>
        </authorList>
    </citation>
    <scope>NUCLEOTIDE SEQUENCE [LARGE SCALE MRNA] (ISOFORM 2)</scope>
    <source>
        <strain evidence="11">FVB/N</strain>
        <tissue evidence="11">Kidney</tissue>
    </source>
</reference>
<reference evidence="9 15" key="4">
    <citation type="journal article" date="2005" name="Genomics">
        <title>PRR5 encodes a conserved proline-rich protein predominant in kidney: analysis of genomic organization, expression, and mutation status in breast and colorectal carcinomas.</title>
        <authorList>
            <person name="Johnstone C.N."/>
            <person name="Castellvi-Bel S."/>
            <person name="Chang L.M."/>
            <person name="Sung R.K."/>
            <person name="Bowser M.J."/>
            <person name="Pique J.M."/>
            <person name="Castells A."/>
            <person name="Rustgi A.K."/>
        </authorList>
    </citation>
    <scope>IDENTIFICATION</scope>
</reference>
<reference key="5">
    <citation type="journal article" date="2010" name="Cell">
        <title>A tissue-specific atlas of mouse protein phosphorylation and expression.</title>
        <authorList>
            <person name="Huttlin E.L."/>
            <person name="Jedrychowski M.P."/>
            <person name="Elias J.E."/>
            <person name="Goswami T."/>
            <person name="Rad R."/>
            <person name="Beausoleil S.A."/>
            <person name="Villen J."/>
            <person name="Haas W."/>
            <person name="Sowa M.E."/>
            <person name="Gygi S.P."/>
        </authorList>
    </citation>
    <scope>PHOSPHORYLATION [LARGE SCALE ANALYSIS] AT SER-253 AND SER-373</scope>
    <scope>IDENTIFICATION BY MASS SPECTROMETRY [LARGE SCALE ANALYSIS]</scope>
    <source>
        <tissue>Brain</tissue>
        <tissue>Brown adipose tissue</tissue>
        <tissue>Kidney</tissue>
        <tissue>Lung</tissue>
        <tissue>Spleen</tissue>
        <tissue>Testis</tissue>
    </source>
</reference>
<reference key="6">
    <citation type="journal article" date="2010" name="Genes Dev.">
        <title>Tel2 structure and function in the Hsp90-dependent maturation of mTOR and ATR complexes.</title>
        <authorList>
            <person name="Takai H."/>
            <person name="Xie Y."/>
            <person name="de Lange T."/>
            <person name="Pavletich N.P."/>
        </authorList>
    </citation>
    <scope>INTERACTION WITH MTOR</scope>
</reference>
<gene>
    <name evidence="1" type="primary">Prr5</name>
    <name type="synonym">Protor1</name>
</gene>
<comment type="function">
    <text evidence="1">Associated subunit of mTORC2, which regulates cell growth and survival in response to hormonal signals. mTORC2 is activated by growth factors, but, in contrast to mTORC1, seems to be nutrient-insensitive. mTORC2 seems to function upstream of Rho GTPases to regulate the actin cytoskeleton, probably by activating one or more Rho-type guanine nucleotide exchange factors. PRR5 plays an important role in regulation of PDGFRB expression and in modulation of platelet-derived growth factor signaling. May act as a tumor suppressor in breast cancer.</text>
</comment>
<comment type="subunit">
    <text evidence="1 6">Associated component of the mechanistic target of rapamycin complex 2 (mTORC2) (By similarity). Binds directly to MTOR and RICTOR within the TORC2 complex (PubMed:20801936).</text>
</comment>
<comment type="alternative products">
    <event type="alternative splicing"/>
    <isoform>
        <id>Q812A5-1</id>
        <name evidence="3 5">1</name>
        <sequence type="displayed"/>
    </isoform>
    <isoform>
        <id>Q812A5-2</id>
        <name evidence="4 5">2</name>
        <sequence type="described" ref="VSP_052580"/>
    </isoform>
</comment>
<comment type="tissue specificity">
    <text evidence="3">Ubiquitously expressed. Expressed at high levels in kidney.</text>
</comment>
<comment type="similarity">
    <text evidence="9">Belongs to the PROTOR family.</text>
</comment>
<comment type="caution">
    <text evidence="9 10">Was originally thought to be the sequence of Arhgap8 but is actually the sequence of Prr5.</text>
</comment>
<comment type="sequence caution" evidence="9">
    <conflict type="frameshift">
        <sequence resource="EMBL-CDS" id="BAC32586"/>
    </conflict>
</comment>
<organism>
    <name type="scientific">Mus musculus</name>
    <name type="common">Mouse</name>
    <dbReference type="NCBI Taxonomy" id="10090"/>
    <lineage>
        <taxon>Eukaryota</taxon>
        <taxon>Metazoa</taxon>
        <taxon>Chordata</taxon>
        <taxon>Craniata</taxon>
        <taxon>Vertebrata</taxon>
        <taxon>Euteleostomi</taxon>
        <taxon>Mammalia</taxon>
        <taxon>Eutheria</taxon>
        <taxon>Euarchontoglires</taxon>
        <taxon>Glires</taxon>
        <taxon>Rodentia</taxon>
        <taxon>Myomorpha</taxon>
        <taxon>Muroidea</taxon>
        <taxon>Muridae</taxon>
        <taxon>Murinae</taxon>
        <taxon>Mus</taxon>
        <taxon>Mus</taxon>
    </lineage>
</organism>
<accession>Q812A5</accession>
<accession>Q5EAK2</accession>
<accession>Q8BIE7</accession>
<accession>Q8BIK1</accession>
<accession>Q8R1A0</accession>
<proteinExistence type="evidence at protein level"/>
<name>PRR5_MOUSE</name>
<evidence type="ECO:0000250" key="1">
    <source>
        <dbReference type="UniProtKB" id="P85299"/>
    </source>
</evidence>
<evidence type="ECO:0000256" key="2">
    <source>
        <dbReference type="SAM" id="MobiDB-lite"/>
    </source>
</evidence>
<evidence type="ECO:0000269" key="3">
    <source>
    </source>
</evidence>
<evidence type="ECO:0000269" key="4">
    <source>
    </source>
</evidence>
<evidence type="ECO:0000269" key="5">
    <source>
    </source>
</evidence>
<evidence type="ECO:0000269" key="6">
    <source>
    </source>
</evidence>
<evidence type="ECO:0000303" key="7">
    <source>
    </source>
</evidence>
<evidence type="ECO:0000303" key="8">
    <source>
    </source>
</evidence>
<evidence type="ECO:0000305" key="9"/>
<evidence type="ECO:0000305" key="10">
    <source>
    </source>
</evidence>
<evidence type="ECO:0000312" key="11">
    <source>
        <dbReference type="EMBL" id="AAH24991.1"/>
    </source>
</evidence>
<evidence type="ECO:0000312" key="12">
    <source>
        <dbReference type="EMBL" id="AAO39849.1"/>
    </source>
</evidence>
<evidence type="ECO:0000312" key="13">
    <source>
        <dbReference type="EMBL" id="BAC32586.1"/>
    </source>
</evidence>
<evidence type="ECO:0000312" key="14">
    <source>
        <dbReference type="EMBL" id="BAC38171.1"/>
    </source>
</evidence>
<evidence type="ECO:0000312" key="15">
    <source>
        <dbReference type="EMBL" id="DAA05653.1"/>
    </source>
</evidence>
<evidence type="ECO:0007744" key="16">
    <source>
    </source>
</evidence>
<protein>
    <recommendedName>
        <fullName>Proline-rich protein 5</fullName>
    </recommendedName>
    <alternativeName>
        <fullName>Protein observed with Rictor-1</fullName>
        <shortName>Protor-1</shortName>
    </alternativeName>
</protein>
<keyword id="KW-0025">Alternative splicing</keyword>
<keyword id="KW-0131">Cell cycle</keyword>
<keyword id="KW-0597">Phosphoprotein</keyword>
<keyword id="KW-1185">Reference proteome</keyword>
<keyword id="KW-0043">Tumor suppressor</keyword>
<feature type="chain" id="PRO_0000308163" description="Proline-rich protein 5">
    <location>
        <begin position="1"/>
        <end position="387"/>
    </location>
</feature>
<feature type="region of interest" description="Interaction with RICTOR" evidence="1">
    <location>
        <begin position="10"/>
        <end position="96"/>
    </location>
</feature>
<feature type="region of interest" description="Disordered" evidence="2">
    <location>
        <begin position="13"/>
        <end position="34"/>
    </location>
</feature>
<feature type="region of interest" description="Interaction with RICTOR" evidence="1">
    <location>
        <begin position="189"/>
        <end position="219"/>
    </location>
</feature>
<feature type="region of interest" description="Disordered" evidence="2">
    <location>
        <begin position="262"/>
        <end position="387"/>
    </location>
</feature>
<feature type="compositionally biased region" description="Basic and acidic residues" evidence="2">
    <location>
        <begin position="18"/>
        <end position="33"/>
    </location>
</feature>
<feature type="compositionally biased region" description="Polar residues" evidence="2">
    <location>
        <begin position="305"/>
        <end position="314"/>
    </location>
</feature>
<feature type="modified residue" description="Phosphoserine" evidence="16">
    <location>
        <position position="253"/>
    </location>
</feature>
<feature type="modified residue" description="Phosphoserine" evidence="16">
    <location>
        <position position="373"/>
    </location>
</feature>
<feature type="splice variant" id="VSP_052580" description="In isoform 2." evidence="7 8">
    <location>
        <begin position="1"/>
        <end position="9"/>
    </location>
</feature>
<feature type="sequence conflict" description="In Ref. 2; BAC38171." evidence="9" ref="2">
    <original>N</original>
    <variation>K</variation>
    <location>
        <position position="49"/>
    </location>
</feature>
<feature type="sequence conflict" description="In Ref. 1; AAO39849." evidence="9" ref="1">
    <original>GQG</original>
    <variation>ATR</variation>
    <location>
        <begin position="301"/>
        <end position="303"/>
    </location>
</feature>
<feature type="sequence conflict" description="In Ref. 1; AAO39849." evidence="9" ref="1">
    <original>S</original>
    <variation>F</variation>
    <location>
        <position position="305"/>
    </location>
</feature>
<feature type="sequence conflict" description="In Ref. 1; AAO39849." evidence="9" ref="1">
    <original>S</original>
    <variation>P</variation>
    <location>
        <position position="340"/>
    </location>
</feature>
<dbReference type="EMBL" id="AF482997">
    <property type="protein sequence ID" value="AAO39849.1"/>
    <property type="molecule type" value="mRNA"/>
</dbReference>
<dbReference type="EMBL" id="AK046057">
    <property type="protein sequence ID" value="BAC32586.1"/>
    <property type="status" value="ALT_FRAME"/>
    <property type="molecule type" value="mRNA"/>
</dbReference>
<dbReference type="EMBL" id="AK081231">
    <property type="protein sequence ID" value="BAC38171.1"/>
    <property type="molecule type" value="mRNA"/>
</dbReference>
<dbReference type="EMBL" id="BC024991">
    <property type="protein sequence ID" value="AAH24991.1"/>
    <property type="molecule type" value="mRNA"/>
</dbReference>
<dbReference type="EMBL" id="BK005634">
    <property type="protein sequence ID" value="DAA05653.1"/>
    <property type="molecule type" value="mRNA"/>
</dbReference>
<dbReference type="CCDS" id="CCDS27711.1">
    <molecule id="Q812A5-1"/>
</dbReference>
<dbReference type="CCDS" id="CCDS84185.1">
    <molecule id="Q812A5-2"/>
</dbReference>
<dbReference type="RefSeq" id="NP_001333591.1">
    <molecule id="Q812A5-2"/>
    <property type="nucleotide sequence ID" value="NM_001346662.1"/>
</dbReference>
<dbReference type="RefSeq" id="NP_666173.4">
    <molecule id="Q812A5-1"/>
    <property type="nucleotide sequence ID" value="NM_146061.4"/>
</dbReference>
<dbReference type="RefSeq" id="XP_006520344.1">
    <molecule id="Q812A5-2"/>
    <property type="nucleotide sequence ID" value="XM_006520281.5"/>
</dbReference>
<dbReference type="RefSeq" id="XP_030104132.1">
    <molecule id="Q812A5-2"/>
    <property type="nucleotide sequence ID" value="XM_030248272.1"/>
</dbReference>
<dbReference type="SMR" id="Q812A5"/>
<dbReference type="BioGRID" id="224627">
    <property type="interactions" value="1"/>
</dbReference>
<dbReference type="ComplexPortal" id="CPX-4472">
    <property type="entry name" value="mTORC2 complex"/>
</dbReference>
<dbReference type="FunCoup" id="Q812A5">
    <property type="interactions" value="203"/>
</dbReference>
<dbReference type="STRING" id="10090.ENSMUSP00000066396"/>
<dbReference type="iPTMnet" id="Q812A5"/>
<dbReference type="PhosphoSitePlus" id="Q812A5"/>
<dbReference type="jPOST" id="Q812A5"/>
<dbReference type="PaxDb" id="10090-ENSMUSP00000066396"/>
<dbReference type="PeptideAtlas" id="Q812A5"/>
<dbReference type="ProteomicsDB" id="291896">
    <molecule id="Q812A5-1"/>
</dbReference>
<dbReference type="ProteomicsDB" id="291897">
    <molecule id="Q812A5-2"/>
</dbReference>
<dbReference type="Antibodypedia" id="46008">
    <property type="antibodies" value="189 antibodies from 31 providers"/>
</dbReference>
<dbReference type="DNASU" id="109270"/>
<dbReference type="Ensembl" id="ENSMUST00000065499.5">
    <molecule id="Q812A5-1"/>
    <property type="protein sequence ID" value="ENSMUSP00000066396.5"/>
    <property type="gene ID" value="ENSMUSG00000036106.16"/>
</dbReference>
<dbReference type="Ensembl" id="ENSMUST00000171460.8">
    <molecule id="Q812A5-2"/>
    <property type="protein sequence ID" value="ENSMUSP00000127890.2"/>
    <property type="gene ID" value="ENSMUSG00000036106.16"/>
</dbReference>
<dbReference type="GeneID" id="109270"/>
<dbReference type="KEGG" id="mmu:109270"/>
<dbReference type="UCSC" id="uc007xcd.1">
    <molecule id="Q812A5-1"/>
    <property type="organism name" value="mouse"/>
</dbReference>
<dbReference type="AGR" id="MGI:1924714"/>
<dbReference type="CTD" id="55615"/>
<dbReference type="MGI" id="MGI:1924714">
    <property type="gene designation" value="Prr5"/>
</dbReference>
<dbReference type="VEuPathDB" id="HostDB:ENSMUSG00000036106"/>
<dbReference type="eggNOG" id="KOG4406">
    <property type="taxonomic scope" value="Eukaryota"/>
</dbReference>
<dbReference type="GeneTree" id="ENSGT00530000063981"/>
<dbReference type="HOGENOM" id="CLU_046146_0_0_1"/>
<dbReference type="InParanoid" id="Q812A5"/>
<dbReference type="OMA" id="HSVCEMS"/>
<dbReference type="OrthoDB" id="2290221at2759"/>
<dbReference type="PhylomeDB" id="Q812A5"/>
<dbReference type="TreeFam" id="TF314826"/>
<dbReference type="Reactome" id="R-MMU-1257604">
    <property type="pathway name" value="PIP3 activates AKT signaling"/>
</dbReference>
<dbReference type="Reactome" id="R-MMU-389357">
    <property type="pathway name" value="CD28 dependent PI3K/Akt signaling"/>
</dbReference>
<dbReference type="Reactome" id="R-MMU-5218920">
    <property type="pathway name" value="VEGFR2 mediated vascular permeability"/>
</dbReference>
<dbReference type="Reactome" id="R-MMU-6804757">
    <property type="pathway name" value="Regulation of TP53 Degradation"/>
</dbReference>
<dbReference type="Reactome" id="R-MMU-9856530">
    <property type="pathway name" value="High laminar flow shear stress activates signaling by PIEZO1 and PECAM1:CDH5:KDR in endothelial cells"/>
</dbReference>
<dbReference type="BioGRID-ORCS" id="109270">
    <property type="hits" value="0 hits in 77 CRISPR screens"/>
</dbReference>
<dbReference type="ChiTaRS" id="Prr5">
    <property type="organism name" value="mouse"/>
</dbReference>
<dbReference type="PRO" id="PR:Q812A5"/>
<dbReference type="Proteomes" id="UP000000589">
    <property type="component" value="Chromosome 15"/>
</dbReference>
<dbReference type="RNAct" id="Q812A5">
    <property type="molecule type" value="protein"/>
</dbReference>
<dbReference type="Bgee" id="ENSMUSG00000036106">
    <property type="expression patterns" value="Expressed in yolk sac and 109 other cell types or tissues"/>
</dbReference>
<dbReference type="GO" id="GO:0031932">
    <property type="term" value="C:TORC2 complex"/>
    <property type="evidence" value="ECO:0000266"/>
    <property type="project" value="ComplexPortal"/>
</dbReference>
<dbReference type="GO" id="GO:0005096">
    <property type="term" value="F:GTPase activator activity"/>
    <property type="evidence" value="ECO:0000266"/>
    <property type="project" value="MGI"/>
</dbReference>
<dbReference type="GO" id="GO:0030036">
    <property type="term" value="P:actin cytoskeleton organization"/>
    <property type="evidence" value="ECO:0000266"/>
    <property type="project" value="MGI"/>
</dbReference>
<dbReference type="GO" id="GO:0031669">
    <property type="term" value="P:cellular response to nutrient levels"/>
    <property type="evidence" value="ECO:0000303"/>
    <property type="project" value="ComplexPortal"/>
</dbReference>
<dbReference type="GO" id="GO:0007010">
    <property type="term" value="P:cytoskeleton organization"/>
    <property type="evidence" value="ECO:0000303"/>
    <property type="project" value="ComplexPortal"/>
</dbReference>
<dbReference type="GO" id="GO:0043066">
    <property type="term" value="P:negative regulation of apoptotic process"/>
    <property type="evidence" value="ECO:0000303"/>
    <property type="project" value="ComplexPortal"/>
</dbReference>
<dbReference type="GO" id="GO:0043491">
    <property type="term" value="P:phosphatidylinositol 3-kinase/protein kinase B signal transduction"/>
    <property type="evidence" value="ECO:0000315"/>
    <property type="project" value="MGI"/>
</dbReference>
<dbReference type="GO" id="GO:0030307">
    <property type="term" value="P:positive regulation of cell growth"/>
    <property type="evidence" value="ECO:0000303"/>
    <property type="project" value="ComplexPortal"/>
</dbReference>
<dbReference type="GO" id="GO:0030335">
    <property type="term" value="P:positive regulation of cell migration"/>
    <property type="evidence" value="ECO:0000266"/>
    <property type="project" value="MGI"/>
</dbReference>
<dbReference type="GO" id="GO:0051897">
    <property type="term" value="P:positive regulation of phosphatidylinositol 3-kinase/protein kinase B signal transduction"/>
    <property type="evidence" value="ECO:0000315"/>
    <property type="project" value="MGI"/>
</dbReference>
<dbReference type="InterPro" id="IPR013745">
    <property type="entry name" value="Bit61/PRR5"/>
</dbReference>
<dbReference type="InterPro" id="IPR016159">
    <property type="entry name" value="Cullin_repeat-like_dom_sf"/>
</dbReference>
<dbReference type="PANTHER" id="PTHR32428:SF4">
    <property type="entry name" value="PROLINE-RICH PROTEIN 5"/>
    <property type="match status" value="1"/>
</dbReference>
<dbReference type="PANTHER" id="PTHR32428">
    <property type="entry name" value="TARGET OF RAPAMYCIN COMPLEX 2 SUBUNIT BIT61-RELATED"/>
    <property type="match status" value="1"/>
</dbReference>
<dbReference type="Pfam" id="PF08539">
    <property type="entry name" value="HbrB"/>
    <property type="match status" value="1"/>
</dbReference>
<dbReference type="SUPFAM" id="SSF74788">
    <property type="entry name" value="Cullin repeat-like"/>
    <property type="match status" value="1"/>
</dbReference>